<feature type="chain" id="PRO_0000338948" description="Translation initiation factor IF-1">
    <location>
        <begin position="1"/>
        <end position="72"/>
    </location>
</feature>
<feature type="domain" description="S1-like" evidence="1">
    <location>
        <begin position="1"/>
        <end position="72"/>
    </location>
</feature>
<proteinExistence type="inferred from homology"/>
<comment type="function">
    <text evidence="1">One of the essential components for the initiation of protein synthesis. Stabilizes the binding of IF-2 and IF-3 on the 30S subunit to which N-formylmethionyl-tRNA(fMet) subsequently binds. Helps modulate mRNA selection, yielding the 30S pre-initiation complex (PIC). Upon addition of the 50S ribosomal subunit IF-1, IF-2 and IF-3 are released leaving the mature 70S translation initiation complex.</text>
</comment>
<comment type="subunit">
    <text evidence="1">Component of the 30S ribosomal translation pre-initiation complex which assembles on the 30S ribosome in the order IF-2 and IF-3, IF-1 and N-formylmethionyl-tRNA(fMet); mRNA recruitment can occur at any time during PIC assembly.</text>
</comment>
<comment type="subcellular location">
    <subcellularLocation>
        <location evidence="1">Cytoplasm</location>
    </subcellularLocation>
</comment>
<comment type="similarity">
    <text evidence="1">Belongs to the IF-1 family.</text>
</comment>
<reference key="1">
    <citation type="submission" date="2007-03" db="EMBL/GenBank/DDBJ databases">
        <authorList>
            <person name="Heidelberg J."/>
        </authorList>
    </citation>
    <scope>NUCLEOTIDE SEQUENCE [LARGE SCALE GENOMIC DNA]</scope>
    <source>
        <strain>ATCC 39541 / Classical Ogawa 395 / O395</strain>
    </source>
</reference>
<reference key="2">
    <citation type="journal article" date="2008" name="PLoS ONE">
        <title>A recalibrated molecular clock and independent origins for the cholera pandemic clones.</title>
        <authorList>
            <person name="Feng L."/>
            <person name="Reeves P.R."/>
            <person name="Lan R."/>
            <person name="Ren Y."/>
            <person name="Gao C."/>
            <person name="Zhou Z."/>
            <person name="Ren Y."/>
            <person name="Cheng J."/>
            <person name="Wang W."/>
            <person name="Wang J."/>
            <person name="Qian W."/>
            <person name="Li D."/>
            <person name="Wang L."/>
        </authorList>
    </citation>
    <scope>NUCLEOTIDE SEQUENCE [LARGE SCALE GENOMIC DNA]</scope>
    <source>
        <strain>ATCC 39541 / Classical Ogawa 395 / O395</strain>
    </source>
</reference>
<evidence type="ECO:0000255" key="1">
    <source>
        <dbReference type="HAMAP-Rule" id="MF_00075"/>
    </source>
</evidence>
<keyword id="KW-0963">Cytoplasm</keyword>
<keyword id="KW-0396">Initiation factor</keyword>
<keyword id="KW-0648">Protein biosynthesis</keyword>
<keyword id="KW-0694">RNA-binding</keyword>
<keyword id="KW-0699">rRNA-binding</keyword>
<sequence>MAKEDVIEMQGTVLDTLPNTMFRVELENGHVVTAHISGKMRKNYIRILTGDKVTVEMTPYDLSKGRIVFRAR</sequence>
<gene>
    <name evidence="1" type="primary">infA</name>
    <name type="ordered locus">VC0395_A1338</name>
    <name type="ordered locus">VC395_1853</name>
</gene>
<organism>
    <name type="scientific">Vibrio cholerae serotype O1 (strain ATCC 39541 / Classical Ogawa 395 / O395)</name>
    <dbReference type="NCBI Taxonomy" id="345073"/>
    <lineage>
        <taxon>Bacteria</taxon>
        <taxon>Pseudomonadati</taxon>
        <taxon>Pseudomonadota</taxon>
        <taxon>Gammaproteobacteria</taxon>
        <taxon>Vibrionales</taxon>
        <taxon>Vibrionaceae</taxon>
        <taxon>Vibrio</taxon>
    </lineage>
</organism>
<protein>
    <recommendedName>
        <fullName evidence="1">Translation initiation factor IF-1</fullName>
    </recommendedName>
</protein>
<name>IF1_VIBC3</name>
<dbReference type="EMBL" id="CP000627">
    <property type="protein sequence ID" value="ABQ19511.1"/>
    <property type="molecule type" value="Genomic_DNA"/>
</dbReference>
<dbReference type="EMBL" id="CP001235">
    <property type="protein sequence ID" value="ACP09850.1"/>
    <property type="molecule type" value="Genomic_DNA"/>
</dbReference>
<dbReference type="RefSeq" id="WP_001040192.1">
    <property type="nucleotide sequence ID" value="NZ_JAACZH010000016.1"/>
</dbReference>
<dbReference type="SMR" id="A5F7F3"/>
<dbReference type="GeneID" id="97540801"/>
<dbReference type="KEGG" id="vco:VC0395_A1338"/>
<dbReference type="KEGG" id="vcr:VC395_1853"/>
<dbReference type="PATRIC" id="fig|345073.21.peg.1795"/>
<dbReference type="eggNOG" id="COG0361">
    <property type="taxonomic scope" value="Bacteria"/>
</dbReference>
<dbReference type="HOGENOM" id="CLU_151267_1_0_6"/>
<dbReference type="OrthoDB" id="9803250at2"/>
<dbReference type="Proteomes" id="UP000000249">
    <property type="component" value="Chromosome 2"/>
</dbReference>
<dbReference type="GO" id="GO:0005829">
    <property type="term" value="C:cytosol"/>
    <property type="evidence" value="ECO:0007669"/>
    <property type="project" value="TreeGrafter"/>
</dbReference>
<dbReference type="GO" id="GO:0043022">
    <property type="term" value="F:ribosome binding"/>
    <property type="evidence" value="ECO:0007669"/>
    <property type="project" value="UniProtKB-UniRule"/>
</dbReference>
<dbReference type="GO" id="GO:0019843">
    <property type="term" value="F:rRNA binding"/>
    <property type="evidence" value="ECO:0007669"/>
    <property type="project" value="UniProtKB-UniRule"/>
</dbReference>
<dbReference type="GO" id="GO:0003743">
    <property type="term" value="F:translation initiation factor activity"/>
    <property type="evidence" value="ECO:0007669"/>
    <property type="project" value="UniProtKB-UniRule"/>
</dbReference>
<dbReference type="CDD" id="cd04451">
    <property type="entry name" value="S1_IF1"/>
    <property type="match status" value="1"/>
</dbReference>
<dbReference type="FunFam" id="2.40.50.140:FF:000002">
    <property type="entry name" value="Translation initiation factor IF-1"/>
    <property type="match status" value="1"/>
</dbReference>
<dbReference type="Gene3D" id="2.40.50.140">
    <property type="entry name" value="Nucleic acid-binding proteins"/>
    <property type="match status" value="1"/>
</dbReference>
<dbReference type="HAMAP" id="MF_00075">
    <property type="entry name" value="IF_1"/>
    <property type="match status" value="1"/>
</dbReference>
<dbReference type="InterPro" id="IPR012340">
    <property type="entry name" value="NA-bd_OB-fold"/>
</dbReference>
<dbReference type="InterPro" id="IPR006196">
    <property type="entry name" value="RNA-binding_domain_S1_IF1"/>
</dbReference>
<dbReference type="InterPro" id="IPR003029">
    <property type="entry name" value="S1_domain"/>
</dbReference>
<dbReference type="InterPro" id="IPR004368">
    <property type="entry name" value="TIF_IF1"/>
</dbReference>
<dbReference type="NCBIfam" id="TIGR00008">
    <property type="entry name" value="infA"/>
    <property type="match status" value="1"/>
</dbReference>
<dbReference type="PANTHER" id="PTHR33370">
    <property type="entry name" value="TRANSLATION INITIATION FACTOR IF-1, CHLOROPLASTIC"/>
    <property type="match status" value="1"/>
</dbReference>
<dbReference type="PANTHER" id="PTHR33370:SF1">
    <property type="entry name" value="TRANSLATION INITIATION FACTOR IF-1, CHLOROPLASTIC"/>
    <property type="match status" value="1"/>
</dbReference>
<dbReference type="Pfam" id="PF01176">
    <property type="entry name" value="eIF-1a"/>
    <property type="match status" value="1"/>
</dbReference>
<dbReference type="SMART" id="SM00316">
    <property type="entry name" value="S1"/>
    <property type="match status" value="1"/>
</dbReference>
<dbReference type="SUPFAM" id="SSF50249">
    <property type="entry name" value="Nucleic acid-binding proteins"/>
    <property type="match status" value="1"/>
</dbReference>
<dbReference type="PROSITE" id="PS50832">
    <property type="entry name" value="S1_IF1_TYPE"/>
    <property type="match status" value="1"/>
</dbReference>
<accession>A5F7F3</accession>
<accession>C3M1D4</accession>